<organism>
    <name type="scientific">Staphylococcus epidermidis (strain ATCC 12228 / FDA PCI 1200)</name>
    <dbReference type="NCBI Taxonomy" id="176280"/>
    <lineage>
        <taxon>Bacteria</taxon>
        <taxon>Bacillati</taxon>
        <taxon>Bacillota</taxon>
        <taxon>Bacilli</taxon>
        <taxon>Bacillales</taxon>
        <taxon>Staphylococcaceae</taxon>
        <taxon>Staphylococcus</taxon>
    </lineage>
</organism>
<sequence length="284" mass="33060">MNVFQMRDKLKARLKHLDVEFKFDREEETLRIVRIDNHKGVTIKLNAIVAKYEEQKEKIIDEICYYVEEAIAQMGDEVINNVEDIQIMPVIRATSFDKETKEGHAFVLTEHTAETNIYYALDLGKSYRLIDENMLQTLNLTAQQVKEMSLFNVRKLECRYSTDEVKGNIFYFINTNDGYDASRILNTSFLNHIQHQCEGEMLVGVPHQDVLILADIRNKTGYDVMAHLTMEFFTKGLVPITSLSFGYDNGHLEPIFILGKNNKQKRDPNVIQRLEANRKKFKKD</sequence>
<evidence type="ECO:0000255" key="1">
    <source>
        <dbReference type="HAMAP-Rule" id="MF_01548"/>
    </source>
</evidence>
<name>Y1416_STAES</name>
<reference key="1">
    <citation type="journal article" date="2003" name="Mol. Microbiol.">
        <title>Genome-based analysis of virulence genes in a non-biofilm-forming Staphylococcus epidermidis strain (ATCC 12228).</title>
        <authorList>
            <person name="Zhang Y.-Q."/>
            <person name="Ren S.-X."/>
            <person name="Li H.-L."/>
            <person name="Wang Y.-X."/>
            <person name="Fu G."/>
            <person name="Yang J."/>
            <person name="Qin Z.-Q."/>
            <person name="Miao Y.-G."/>
            <person name="Wang W.-Y."/>
            <person name="Chen R.-S."/>
            <person name="Shen Y."/>
            <person name="Chen Z."/>
            <person name="Yuan Z.-H."/>
            <person name="Zhao G.-P."/>
            <person name="Qu D."/>
            <person name="Danchin A."/>
            <person name="Wen Y.-M."/>
        </authorList>
    </citation>
    <scope>NUCLEOTIDE SEQUENCE [LARGE SCALE GENOMIC DNA]</scope>
    <source>
        <strain>ATCC 12228 / FDA PCI 1200</strain>
    </source>
</reference>
<feature type="chain" id="PRO_0000171113" description="UPF0354 protein SE_1416">
    <location>
        <begin position="1"/>
        <end position="284"/>
    </location>
</feature>
<gene>
    <name type="ordered locus">SE_1416</name>
</gene>
<accession>Q8CS46</accession>
<proteinExistence type="inferred from homology"/>
<comment type="similarity">
    <text evidence="1">Belongs to the UPF0354 family.</text>
</comment>
<protein>
    <recommendedName>
        <fullName evidence="1">UPF0354 protein SE_1416</fullName>
    </recommendedName>
</protein>
<dbReference type="EMBL" id="AE015929">
    <property type="protein sequence ID" value="AAO05015.1"/>
    <property type="molecule type" value="Genomic_DNA"/>
</dbReference>
<dbReference type="RefSeq" id="NP_764971.1">
    <property type="nucleotide sequence ID" value="NC_004461.1"/>
</dbReference>
<dbReference type="RefSeq" id="WP_001832670.1">
    <property type="nucleotide sequence ID" value="NZ_WBME01000009.1"/>
</dbReference>
<dbReference type="KEGG" id="sep:SE_1416"/>
<dbReference type="PATRIC" id="fig|176280.10.peg.1383"/>
<dbReference type="eggNOG" id="COG4848">
    <property type="taxonomic scope" value="Bacteria"/>
</dbReference>
<dbReference type="HOGENOM" id="CLU_085634_0_0_9"/>
<dbReference type="OrthoDB" id="154553at2"/>
<dbReference type="Proteomes" id="UP000001411">
    <property type="component" value="Chromosome"/>
</dbReference>
<dbReference type="HAMAP" id="MF_01548">
    <property type="entry name" value="UPF0354"/>
    <property type="match status" value="1"/>
</dbReference>
<dbReference type="InterPro" id="IPR010838">
    <property type="entry name" value="DUF1444"/>
</dbReference>
<dbReference type="NCBIfam" id="NF010189">
    <property type="entry name" value="PRK13668.1"/>
    <property type="match status" value="1"/>
</dbReference>
<dbReference type="Pfam" id="PF07285">
    <property type="entry name" value="DUF1444"/>
    <property type="match status" value="1"/>
</dbReference>
<dbReference type="PIRSF" id="PIRSF012562">
    <property type="entry name" value="UCP012562"/>
    <property type="match status" value="1"/>
</dbReference>